<gene>
    <name evidence="1" type="primary">lipA</name>
    <name type="ordered locus">BBta_3949</name>
</gene>
<dbReference type="EC" id="2.8.1.8" evidence="1"/>
<dbReference type="EMBL" id="CP000494">
    <property type="protein sequence ID" value="ABQ36019.1"/>
    <property type="molecule type" value="Genomic_DNA"/>
</dbReference>
<dbReference type="RefSeq" id="WP_012044023.1">
    <property type="nucleotide sequence ID" value="NC_009485.1"/>
</dbReference>
<dbReference type="SMR" id="A5EIM5"/>
<dbReference type="STRING" id="288000.BBta_3949"/>
<dbReference type="KEGG" id="bbt:BBta_3949"/>
<dbReference type="eggNOG" id="COG0320">
    <property type="taxonomic scope" value="Bacteria"/>
</dbReference>
<dbReference type="HOGENOM" id="CLU_033144_2_1_5"/>
<dbReference type="OrthoDB" id="9787898at2"/>
<dbReference type="UniPathway" id="UPA00538">
    <property type="reaction ID" value="UER00593"/>
</dbReference>
<dbReference type="Proteomes" id="UP000000246">
    <property type="component" value="Chromosome"/>
</dbReference>
<dbReference type="GO" id="GO:0005737">
    <property type="term" value="C:cytoplasm"/>
    <property type="evidence" value="ECO:0007669"/>
    <property type="project" value="UniProtKB-SubCell"/>
</dbReference>
<dbReference type="GO" id="GO:0051539">
    <property type="term" value="F:4 iron, 4 sulfur cluster binding"/>
    <property type="evidence" value="ECO:0007669"/>
    <property type="project" value="UniProtKB-UniRule"/>
</dbReference>
<dbReference type="GO" id="GO:0016992">
    <property type="term" value="F:lipoate synthase activity"/>
    <property type="evidence" value="ECO:0007669"/>
    <property type="project" value="UniProtKB-UniRule"/>
</dbReference>
<dbReference type="GO" id="GO:0046872">
    <property type="term" value="F:metal ion binding"/>
    <property type="evidence" value="ECO:0007669"/>
    <property type="project" value="UniProtKB-KW"/>
</dbReference>
<dbReference type="CDD" id="cd01335">
    <property type="entry name" value="Radical_SAM"/>
    <property type="match status" value="1"/>
</dbReference>
<dbReference type="FunFam" id="3.20.20.70:FF:000186">
    <property type="entry name" value="Lipoyl synthase"/>
    <property type="match status" value="1"/>
</dbReference>
<dbReference type="Gene3D" id="3.20.20.70">
    <property type="entry name" value="Aldolase class I"/>
    <property type="match status" value="1"/>
</dbReference>
<dbReference type="HAMAP" id="MF_00206">
    <property type="entry name" value="Lipoyl_synth"/>
    <property type="match status" value="1"/>
</dbReference>
<dbReference type="InterPro" id="IPR013785">
    <property type="entry name" value="Aldolase_TIM"/>
</dbReference>
<dbReference type="InterPro" id="IPR006638">
    <property type="entry name" value="Elp3/MiaA/NifB-like_rSAM"/>
</dbReference>
<dbReference type="InterPro" id="IPR003698">
    <property type="entry name" value="Lipoyl_synth"/>
</dbReference>
<dbReference type="InterPro" id="IPR007197">
    <property type="entry name" value="rSAM"/>
</dbReference>
<dbReference type="NCBIfam" id="TIGR00510">
    <property type="entry name" value="lipA"/>
    <property type="match status" value="1"/>
</dbReference>
<dbReference type="NCBIfam" id="NF004019">
    <property type="entry name" value="PRK05481.1"/>
    <property type="match status" value="1"/>
</dbReference>
<dbReference type="NCBIfam" id="NF009544">
    <property type="entry name" value="PRK12928.1"/>
    <property type="match status" value="1"/>
</dbReference>
<dbReference type="PANTHER" id="PTHR10949">
    <property type="entry name" value="LIPOYL SYNTHASE"/>
    <property type="match status" value="1"/>
</dbReference>
<dbReference type="PANTHER" id="PTHR10949:SF0">
    <property type="entry name" value="LIPOYL SYNTHASE, MITOCHONDRIAL"/>
    <property type="match status" value="1"/>
</dbReference>
<dbReference type="Pfam" id="PF04055">
    <property type="entry name" value="Radical_SAM"/>
    <property type="match status" value="1"/>
</dbReference>
<dbReference type="PIRSF" id="PIRSF005963">
    <property type="entry name" value="Lipoyl_synth"/>
    <property type="match status" value="1"/>
</dbReference>
<dbReference type="SFLD" id="SFLDF00271">
    <property type="entry name" value="lipoyl_synthase"/>
    <property type="match status" value="1"/>
</dbReference>
<dbReference type="SFLD" id="SFLDS00029">
    <property type="entry name" value="Radical_SAM"/>
    <property type="match status" value="1"/>
</dbReference>
<dbReference type="SMART" id="SM00729">
    <property type="entry name" value="Elp3"/>
    <property type="match status" value="1"/>
</dbReference>
<dbReference type="SUPFAM" id="SSF102114">
    <property type="entry name" value="Radical SAM enzymes"/>
    <property type="match status" value="1"/>
</dbReference>
<dbReference type="PROSITE" id="PS51918">
    <property type="entry name" value="RADICAL_SAM"/>
    <property type="match status" value="1"/>
</dbReference>
<name>LIPA_BRASB</name>
<comment type="function">
    <text evidence="1">Catalyzes the radical-mediated insertion of two sulfur atoms into the C-6 and C-8 positions of the octanoyl moiety bound to the lipoyl domains of lipoate-dependent enzymes, thereby converting the octanoylated domains into lipoylated derivatives.</text>
</comment>
<comment type="catalytic activity">
    <reaction evidence="1">
        <text>[[Fe-S] cluster scaffold protein carrying a second [4Fe-4S](2+) cluster] + N(6)-octanoyl-L-lysyl-[protein] + 2 oxidized [2Fe-2S]-[ferredoxin] + 2 S-adenosyl-L-methionine + 4 H(+) = [[Fe-S] cluster scaffold protein] + N(6)-[(R)-dihydrolipoyl]-L-lysyl-[protein] + 4 Fe(3+) + 2 hydrogen sulfide + 2 5'-deoxyadenosine + 2 L-methionine + 2 reduced [2Fe-2S]-[ferredoxin]</text>
        <dbReference type="Rhea" id="RHEA:16585"/>
        <dbReference type="Rhea" id="RHEA-COMP:9928"/>
        <dbReference type="Rhea" id="RHEA-COMP:10000"/>
        <dbReference type="Rhea" id="RHEA-COMP:10001"/>
        <dbReference type="Rhea" id="RHEA-COMP:10475"/>
        <dbReference type="Rhea" id="RHEA-COMP:14568"/>
        <dbReference type="Rhea" id="RHEA-COMP:14569"/>
        <dbReference type="ChEBI" id="CHEBI:15378"/>
        <dbReference type="ChEBI" id="CHEBI:17319"/>
        <dbReference type="ChEBI" id="CHEBI:29034"/>
        <dbReference type="ChEBI" id="CHEBI:29919"/>
        <dbReference type="ChEBI" id="CHEBI:33722"/>
        <dbReference type="ChEBI" id="CHEBI:33737"/>
        <dbReference type="ChEBI" id="CHEBI:33738"/>
        <dbReference type="ChEBI" id="CHEBI:57844"/>
        <dbReference type="ChEBI" id="CHEBI:59789"/>
        <dbReference type="ChEBI" id="CHEBI:78809"/>
        <dbReference type="ChEBI" id="CHEBI:83100"/>
        <dbReference type="EC" id="2.8.1.8"/>
    </reaction>
</comment>
<comment type="cofactor">
    <cofactor evidence="1">
        <name>[4Fe-4S] cluster</name>
        <dbReference type="ChEBI" id="CHEBI:49883"/>
    </cofactor>
    <text evidence="1">Binds 2 [4Fe-4S] clusters per subunit. One cluster is coordinated with 3 cysteines and an exchangeable S-adenosyl-L-methionine.</text>
</comment>
<comment type="pathway">
    <text evidence="1">Protein modification; protein lipoylation via endogenous pathway; protein N(6)-(lipoyl)lysine from octanoyl-[acyl-carrier-protein]: step 2/2.</text>
</comment>
<comment type="subcellular location">
    <subcellularLocation>
        <location evidence="1">Cytoplasm</location>
    </subcellularLocation>
</comment>
<comment type="similarity">
    <text evidence="1">Belongs to the radical SAM superfamily. Lipoyl synthase family.</text>
</comment>
<feature type="chain" id="PRO_1000012192" description="Lipoyl synthase">
    <location>
        <begin position="1"/>
        <end position="319"/>
    </location>
</feature>
<feature type="domain" description="Radical SAM core" evidence="2">
    <location>
        <begin position="73"/>
        <end position="289"/>
    </location>
</feature>
<feature type="region of interest" description="Disordered" evidence="3">
    <location>
        <begin position="1"/>
        <end position="32"/>
    </location>
</feature>
<feature type="compositionally biased region" description="Polar residues" evidence="3">
    <location>
        <begin position="1"/>
        <end position="12"/>
    </location>
</feature>
<feature type="binding site" evidence="1">
    <location>
        <position position="61"/>
    </location>
    <ligand>
        <name>[4Fe-4S] cluster</name>
        <dbReference type="ChEBI" id="CHEBI:49883"/>
        <label>1</label>
    </ligand>
</feature>
<feature type="binding site" evidence="1">
    <location>
        <position position="66"/>
    </location>
    <ligand>
        <name>[4Fe-4S] cluster</name>
        <dbReference type="ChEBI" id="CHEBI:49883"/>
        <label>1</label>
    </ligand>
</feature>
<feature type="binding site" evidence="1">
    <location>
        <position position="72"/>
    </location>
    <ligand>
        <name>[4Fe-4S] cluster</name>
        <dbReference type="ChEBI" id="CHEBI:49883"/>
        <label>1</label>
    </ligand>
</feature>
<feature type="binding site" evidence="1">
    <location>
        <position position="87"/>
    </location>
    <ligand>
        <name>[4Fe-4S] cluster</name>
        <dbReference type="ChEBI" id="CHEBI:49883"/>
        <label>2</label>
        <note>4Fe-4S-S-AdoMet</note>
    </ligand>
</feature>
<feature type="binding site" evidence="1">
    <location>
        <position position="91"/>
    </location>
    <ligand>
        <name>[4Fe-4S] cluster</name>
        <dbReference type="ChEBI" id="CHEBI:49883"/>
        <label>2</label>
        <note>4Fe-4S-S-AdoMet</note>
    </ligand>
</feature>
<feature type="binding site" evidence="1">
    <location>
        <position position="94"/>
    </location>
    <ligand>
        <name>[4Fe-4S] cluster</name>
        <dbReference type="ChEBI" id="CHEBI:49883"/>
        <label>2</label>
        <note>4Fe-4S-S-AdoMet</note>
    </ligand>
</feature>
<feature type="binding site" evidence="1">
    <location>
        <position position="300"/>
    </location>
    <ligand>
        <name>[4Fe-4S] cluster</name>
        <dbReference type="ChEBI" id="CHEBI:49883"/>
        <label>1</label>
    </ligand>
</feature>
<keyword id="KW-0004">4Fe-4S</keyword>
<keyword id="KW-0963">Cytoplasm</keyword>
<keyword id="KW-0408">Iron</keyword>
<keyword id="KW-0411">Iron-sulfur</keyword>
<keyword id="KW-0479">Metal-binding</keyword>
<keyword id="KW-1185">Reference proteome</keyword>
<keyword id="KW-0949">S-adenosyl-L-methionine</keyword>
<keyword id="KW-0808">Transferase</keyword>
<sequence>MVTIVDTLSNTPLRPRHPEKANRPDSISPAKPSWIRVKAPTTRGYADTRNIVRENGLVTVCEEAGCPNIGECWDKKHATFMIMGDTCTRACAFCNVKTGLPAALDAGEPEHVAEATFKLGLAHVVVTSVDRDDLADGGAAHIAATIRAIRATCPTTTIEVLTPDFLRKDGALEQVVAAKPDVFNHNLETVPSRYLSVRPGARYFHSIRLLQRVKEIDPTIFTKSGIMVGLGEQRHEVLQVMDDLRSAEVDFLTIGQYLQPTKKHHAVMAYVTPEEFSNYETVAYTKGFLMVSASPLTRSSHHAGEDFAKLKAARDALAR</sequence>
<evidence type="ECO:0000255" key="1">
    <source>
        <dbReference type="HAMAP-Rule" id="MF_00206"/>
    </source>
</evidence>
<evidence type="ECO:0000255" key="2">
    <source>
        <dbReference type="PROSITE-ProRule" id="PRU01266"/>
    </source>
</evidence>
<evidence type="ECO:0000256" key="3">
    <source>
        <dbReference type="SAM" id="MobiDB-lite"/>
    </source>
</evidence>
<proteinExistence type="inferred from homology"/>
<accession>A5EIM5</accession>
<reference key="1">
    <citation type="journal article" date="2007" name="Science">
        <title>Legumes symbioses: absence of nod genes in photosynthetic bradyrhizobia.</title>
        <authorList>
            <person name="Giraud E."/>
            <person name="Moulin L."/>
            <person name="Vallenet D."/>
            <person name="Barbe V."/>
            <person name="Cytryn E."/>
            <person name="Avarre J.-C."/>
            <person name="Jaubert M."/>
            <person name="Simon D."/>
            <person name="Cartieaux F."/>
            <person name="Prin Y."/>
            <person name="Bena G."/>
            <person name="Hannibal L."/>
            <person name="Fardoux J."/>
            <person name="Kojadinovic M."/>
            <person name="Vuillet L."/>
            <person name="Lajus A."/>
            <person name="Cruveiller S."/>
            <person name="Rouy Z."/>
            <person name="Mangenot S."/>
            <person name="Segurens B."/>
            <person name="Dossat C."/>
            <person name="Franck W.L."/>
            <person name="Chang W.-S."/>
            <person name="Saunders E."/>
            <person name="Bruce D."/>
            <person name="Richardson P."/>
            <person name="Normand P."/>
            <person name="Dreyfus B."/>
            <person name="Pignol D."/>
            <person name="Stacey G."/>
            <person name="Emerich D."/>
            <person name="Vermeglio A."/>
            <person name="Medigue C."/>
            <person name="Sadowsky M."/>
        </authorList>
    </citation>
    <scope>NUCLEOTIDE SEQUENCE [LARGE SCALE GENOMIC DNA]</scope>
    <source>
        <strain>BTAi1 / ATCC BAA-1182</strain>
    </source>
</reference>
<protein>
    <recommendedName>
        <fullName evidence="1">Lipoyl synthase</fullName>
        <ecNumber evidence="1">2.8.1.8</ecNumber>
    </recommendedName>
    <alternativeName>
        <fullName evidence="1">Lip-syn</fullName>
        <shortName evidence="1">LS</shortName>
    </alternativeName>
    <alternativeName>
        <fullName evidence="1">Lipoate synthase</fullName>
    </alternativeName>
    <alternativeName>
        <fullName evidence="1">Lipoic acid synthase</fullName>
    </alternativeName>
    <alternativeName>
        <fullName evidence="1">Sulfur insertion protein LipA</fullName>
    </alternativeName>
</protein>
<organism>
    <name type="scientific">Bradyrhizobium sp. (strain BTAi1 / ATCC BAA-1182)</name>
    <dbReference type="NCBI Taxonomy" id="288000"/>
    <lineage>
        <taxon>Bacteria</taxon>
        <taxon>Pseudomonadati</taxon>
        <taxon>Pseudomonadota</taxon>
        <taxon>Alphaproteobacteria</taxon>
        <taxon>Hyphomicrobiales</taxon>
        <taxon>Nitrobacteraceae</taxon>
        <taxon>Bradyrhizobium</taxon>
    </lineage>
</organism>